<organism>
    <name type="scientific">Mus musculus</name>
    <name type="common">Mouse</name>
    <dbReference type="NCBI Taxonomy" id="10090"/>
    <lineage>
        <taxon>Eukaryota</taxon>
        <taxon>Metazoa</taxon>
        <taxon>Chordata</taxon>
        <taxon>Craniata</taxon>
        <taxon>Vertebrata</taxon>
        <taxon>Euteleostomi</taxon>
        <taxon>Mammalia</taxon>
        <taxon>Eutheria</taxon>
        <taxon>Euarchontoglires</taxon>
        <taxon>Glires</taxon>
        <taxon>Rodentia</taxon>
        <taxon>Myomorpha</taxon>
        <taxon>Muroidea</taxon>
        <taxon>Muridae</taxon>
        <taxon>Murinae</taxon>
        <taxon>Mus</taxon>
        <taxon>Mus</taxon>
    </lineage>
</organism>
<proteinExistence type="evidence at protein level"/>
<dbReference type="EMBL" id="BC011531">
    <property type="protein sequence ID" value="AAH11531.1"/>
    <property type="molecule type" value="mRNA"/>
</dbReference>
<dbReference type="EMBL" id="BC029079">
    <property type="protein sequence ID" value="AAH29079.1"/>
    <property type="status" value="ALT_INIT"/>
    <property type="molecule type" value="mRNA"/>
</dbReference>
<dbReference type="EMBL" id="BC066051">
    <property type="status" value="NOT_ANNOTATED_CDS"/>
    <property type="molecule type" value="mRNA"/>
</dbReference>
<dbReference type="EMBL" id="AK049083">
    <property type="protein sequence ID" value="BAC33537.1"/>
    <property type="status" value="ALT_FRAME"/>
    <property type="molecule type" value="mRNA"/>
</dbReference>
<dbReference type="EMBL" id="AK051686">
    <property type="protein sequence ID" value="BAC34721.1"/>
    <property type="status" value="ALT_FRAME"/>
    <property type="molecule type" value="mRNA"/>
</dbReference>
<dbReference type="EMBL" id="AK139077">
    <property type="protein sequence ID" value="BAE23881.1"/>
    <property type="status" value="ALT_INIT"/>
    <property type="molecule type" value="mRNA"/>
</dbReference>
<dbReference type="EMBL" id="AK172039">
    <property type="protein sequence ID" value="BAE42792.1"/>
    <property type="status" value="ALT_INIT"/>
    <property type="molecule type" value="mRNA"/>
</dbReference>
<dbReference type="CCDS" id="CCDS88725.1">
    <molecule id="Q6NZN0-4"/>
</dbReference>
<dbReference type="RefSeq" id="NP_001355612.1">
    <molecule id="Q6NZN0-1"/>
    <property type="nucleotide sequence ID" value="NM_001368683.1"/>
</dbReference>
<dbReference type="RefSeq" id="NP_001355613.1">
    <molecule id="Q6NZN0-4"/>
    <property type="nucleotide sequence ID" value="NM_001368684.1"/>
</dbReference>
<dbReference type="RefSeq" id="NP_598838.3">
    <property type="nucleotide sequence ID" value="NM_134077.4"/>
</dbReference>
<dbReference type="SMR" id="Q6NZN0"/>
<dbReference type="BioGRID" id="216580">
    <property type="interactions" value="4"/>
</dbReference>
<dbReference type="FunCoup" id="Q6NZN0">
    <property type="interactions" value="5370"/>
</dbReference>
<dbReference type="STRING" id="10090.ENSMUSP00000097901"/>
<dbReference type="GlyGen" id="Q6NZN0">
    <property type="glycosylation" value="5 sites, 2 N-linked glycans (2 sites), 1 O-linked glycan (3 sites)"/>
</dbReference>
<dbReference type="iPTMnet" id="Q6NZN0"/>
<dbReference type="PhosphoSitePlus" id="Q6NZN0"/>
<dbReference type="SwissPalm" id="Q6NZN0"/>
<dbReference type="jPOST" id="Q6NZN0"/>
<dbReference type="PaxDb" id="10090-ENSMUSP00000097901"/>
<dbReference type="PeptideAtlas" id="Q6NZN0"/>
<dbReference type="ProteomicsDB" id="255124">
    <molecule id="Q6NZN0-1"/>
</dbReference>
<dbReference type="ProteomicsDB" id="255125">
    <molecule id="Q6NZN0-2"/>
</dbReference>
<dbReference type="ProteomicsDB" id="255126">
    <molecule id="Q6NZN0-3"/>
</dbReference>
<dbReference type="ProteomicsDB" id="255127">
    <molecule id="Q6NZN0-4"/>
</dbReference>
<dbReference type="ProteomicsDB" id="255128">
    <molecule id="Q6NZN0-5"/>
</dbReference>
<dbReference type="Pumba" id="Q6NZN0"/>
<dbReference type="Antibodypedia" id="24703">
    <property type="antibodies" value="237 antibodies from 29 providers"/>
</dbReference>
<dbReference type="DNASU" id="74213"/>
<dbReference type="Ensembl" id="ENSMUST00000022715.14">
    <molecule id="Q6NZN0-4"/>
    <property type="protein sequence ID" value="ENSMUSP00000022715.8"/>
    <property type="gene ID" value="ENSMUSG00000022119.16"/>
</dbReference>
<dbReference type="GeneID" id="74213"/>
<dbReference type="KEGG" id="mmu:74213"/>
<dbReference type="UCSC" id="uc007uxl.2">
    <molecule id="Q6NZN0-4"/>
    <property type="organism name" value="mouse"/>
</dbReference>
<dbReference type="UCSC" id="uc007uxn.1">
    <molecule id="Q6NZN0-3"/>
    <property type="organism name" value="mouse"/>
</dbReference>
<dbReference type="AGR" id="MGI:1921463"/>
<dbReference type="CTD" id="64062"/>
<dbReference type="MGI" id="MGI:1921463">
    <property type="gene designation" value="Rbm26"/>
</dbReference>
<dbReference type="VEuPathDB" id="HostDB:ENSMUSG00000022119"/>
<dbReference type="eggNOG" id="KOG2135">
    <property type="taxonomic scope" value="Eukaryota"/>
</dbReference>
<dbReference type="GeneTree" id="ENSGT00510000046929"/>
<dbReference type="InParanoid" id="Q6NZN0"/>
<dbReference type="PhylomeDB" id="Q6NZN0"/>
<dbReference type="BioGRID-ORCS" id="74213">
    <property type="hits" value="4 hits in 78 CRISPR screens"/>
</dbReference>
<dbReference type="ChiTaRS" id="Rbm26">
    <property type="organism name" value="mouse"/>
</dbReference>
<dbReference type="PRO" id="PR:Q6NZN0"/>
<dbReference type="Proteomes" id="UP000000589">
    <property type="component" value="Chromosome 14"/>
</dbReference>
<dbReference type="RNAct" id="Q6NZN0">
    <property type="molecule type" value="protein"/>
</dbReference>
<dbReference type="Bgee" id="ENSMUSG00000022119">
    <property type="expression patterns" value="Expressed in animal zygote and 250 other cell types or tissues"/>
</dbReference>
<dbReference type="ExpressionAtlas" id="Q6NZN0">
    <property type="expression patterns" value="baseline and differential"/>
</dbReference>
<dbReference type="GO" id="GO:0003723">
    <property type="term" value="F:RNA binding"/>
    <property type="evidence" value="ECO:0007669"/>
    <property type="project" value="UniProtKB-KW"/>
</dbReference>
<dbReference type="GO" id="GO:0008270">
    <property type="term" value="F:zinc ion binding"/>
    <property type="evidence" value="ECO:0007669"/>
    <property type="project" value="UniProtKB-KW"/>
</dbReference>
<dbReference type="CDD" id="cd12516">
    <property type="entry name" value="RRM1_RBM26"/>
    <property type="match status" value="1"/>
</dbReference>
<dbReference type="CDD" id="cd12258">
    <property type="entry name" value="RRM2_RBM26_like"/>
    <property type="match status" value="1"/>
</dbReference>
<dbReference type="FunFam" id="3.30.70.330:FF:000331">
    <property type="entry name" value="RNA binding motif protein 26"/>
    <property type="match status" value="1"/>
</dbReference>
<dbReference type="FunFam" id="3.30.70.330:FF:000330">
    <property type="entry name" value="RNA-binding motif protein 26"/>
    <property type="match status" value="1"/>
</dbReference>
<dbReference type="FunFam" id="1.20.1390.10:FF:000001">
    <property type="entry name" value="RNA-binding protein 26 isoform X2"/>
    <property type="match status" value="1"/>
</dbReference>
<dbReference type="Gene3D" id="3.30.70.330">
    <property type="match status" value="2"/>
</dbReference>
<dbReference type="Gene3D" id="1.20.1390.10">
    <property type="entry name" value="PWI domain"/>
    <property type="match status" value="1"/>
</dbReference>
<dbReference type="InterPro" id="IPR012677">
    <property type="entry name" value="Nucleotide-bd_a/b_plait_sf"/>
</dbReference>
<dbReference type="InterPro" id="IPR002483">
    <property type="entry name" value="PWI_dom"/>
</dbReference>
<dbReference type="InterPro" id="IPR035979">
    <property type="entry name" value="RBD_domain_sf"/>
</dbReference>
<dbReference type="InterPro" id="IPR039511">
    <property type="entry name" value="RBM26-like_RRM2"/>
</dbReference>
<dbReference type="InterPro" id="IPR045137">
    <property type="entry name" value="RBM26/27"/>
</dbReference>
<dbReference type="InterPro" id="IPR034859">
    <property type="entry name" value="RBM26_RRM1"/>
</dbReference>
<dbReference type="InterPro" id="IPR000504">
    <property type="entry name" value="RRM_dom"/>
</dbReference>
<dbReference type="InterPro" id="IPR000571">
    <property type="entry name" value="Znf_CCCH"/>
</dbReference>
<dbReference type="PANTHER" id="PTHR14398">
    <property type="entry name" value="RNA RECOGNITION RRM/RNP DOMAIN"/>
    <property type="match status" value="1"/>
</dbReference>
<dbReference type="PANTHER" id="PTHR14398:SF2">
    <property type="entry name" value="RNA-BINDING PROTEIN 26"/>
    <property type="match status" value="1"/>
</dbReference>
<dbReference type="Pfam" id="PF01480">
    <property type="entry name" value="PWI"/>
    <property type="match status" value="1"/>
</dbReference>
<dbReference type="SMART" id="SM00360">
    <property type="entry name" value="RRM"/>
    <property type="match status" value="2"/>
</dbReference>
<dbReference type="SMART" id="SM00356">
    <property type="entry name" value="ZnF_C3H1"/>
    <property type="match status" value="1"/>
</dbReference>
<dbReference type="SUPFAM" id="SSF54928">
    <property type="entry name" value="RNA-binding domain, RBD"/>
    <property type="match status" value="2"/>
</dbReference>
<dbReference type="PROSITE" id="PS50102">
    <property type="entry name" value="RRM"/>
    <property type="match status" value="2"/>
</dbReference>
<dbReference type="PROSITE" id="PS50103">
    <property type="entry name" value="ZF_C3H1"/>
    <property type="match status" value="1"/>
</dbReference>
<accession>Q6NZN0</accession>
<accession>Q3TA77</accession>
<accession>Q3UTU9</accession>
<accession>Q8BQ22</accession>
<accession>Q8C7W9</accession>
<accession>Q8K101</accession>
<accession>Q921K4</accession>
<feature type="chain" id="PRO_0000273377" description="RNA-binding protein 26">
    <location>
        <begin position="1"/>
        <end position="1012"/>
    </location>
</feature>
<feature type="domain" description="RRM 1" evidence="3">
    <location>
        <begin position="537"/>
        <end position="611"/>
    </location>
</feature>
<feature type="domain" description="RRM 2" evidence="3">
    <location>
        <begin position="896"/>
        <end position="965"/>
    </location>
</feature>
<feature type="zinc finger region" description="C3H1-type" evidence="4">
    <location>
        <begin position="288"/>
        <end position="316"/>
    </location>
</feature>
<feature type="region of interest" description="Disordered" evidence="5">
    <location>
        <begin position="106"/>
        <end position="236"/>
    </location>
</feature>
<feature type="region of interest" description="Disordered" evidence="5">
    <location>
        <begin position="334"/>
        <end position="404"/>
    </location>
</feature>
<feature type="region of interest" description="Disordered" evidence="5">
    <location>
        <begin position="465"/>
        <end position="520"/>
    </location>
</feature>
<feature type="region of interest" description="Disordered" evidence="5">
    <location>
        <begin position="647"/>
        <end position="667"/>
    </location>
</feature>
<feature type="region of interest" description="Disordered" evidence="5">
    <location>
        <begin position="858"/>
        <end position="889"/>
    </location>
</feature>
<feature type="region of interest" description="Disordered" evidence="5">
    <location>
        <begin position="970"/>
        <end position="1012"/>
    </location>
</feature>
<feature type="coiled-coil region" evidence="2">
    <location>
        <begin position="98"/>
        <end position="127"/>
    </location>
</feature>
<feature type="coiled-coil region" evidence="2">
    <location>
        <begin position="724"/>
        <end position="800"/>
    </location>
</feature>
<feature type="coiled-coil region" evidence="2">
    <location>
        <begin position="828"/>
        <end position="852"/>
    </location>
</feature>
<feature type="compositionally biased region" description="Basic and acidic residues" evidence="5">
    <location>
        <begin position="106"/>
        <end position="118"/>
    </location>
</feature>
<feature type="compositionally biased region" description="Basic and acidic residues" evidence="5">
    <location>
        <begin position="134"/>
        <end position="168"/>
    </location>
</feature>
<feature type="compositionally biased region" description="Basic residues" evidence="5">
    <location>
        <begin position="169"/>
        <end position="186"/>
    </location>
</feature>
<feature type="compositionally biased region" description="Basic and acidic residues" evidence="5">
    <location>
        <begin position="187"/>
        <end position="201"/>
    </location>
</feature>
<feature type="compositionally biased region" description="Basic and acidic residues" evidence="5">
    <location>
        <begin position="209"/>
        <end position="227"/>
    </location>
</feature>
<feature type="compositionally biased region" description="Pro residues" evidence="5">
    <location>
        <begin position="334"/>
        <end position="388"/>
    </location>
</feature>
<feature type="compositionally biased region" description="Low complexity" evidence="5">
    <location>
        <begin position="394"/>
        <end position="404"/>
    </location>
</feature>
<feature type="compositionally biased region" description="Basic residues" evidence="5">
    <location>
        <begin position="862"/>
        <end position="882"/>
    </location>
</feature>
<feature type="compositionally biased region" description="Acidic residues" evidence="5">
    <location>
        <begin position="973"/>
        <end position="1005"/>
    </location>
</feature>
<feature type="modified residue" description="Phosphoserine" evidence="11">
    <location>
        <position position="127"/>
    </location>
</feature>
<feature type="modified residue" description="Phosphoserine" evidence="1">
    <location>
        <position position="501"/>
    </location>
</feature>
<feature type="modified residue" description="N6-acetyllysine" evidence="12">
    <location>
        <position position="515"/>
    </location>
</feature>
<feature type="modified residue" description="Phosphoserine" evidence="1">
    <location>
        <position position="523"/>
    </location>
</feature>
<feature type="modified residue" description="Phosphoserine" evidence="11">
    <location>
        <position position="621"/>
    </location>
</feature>
<feature type="cross-link" description="Glycyl lysine isopeptide (Lys-Gly) (interchain with G-Cter in SUMO2)" evidence="1">
    <location>
        <position position="94"/>
    </location>
</feature>
<feature type="cross-link" description="Glycyl lysine isopeptide (Lys-Gly) (interchain with G-Cter in SUMO1); alternate" evidence="1">
    <location>
        <position position="106"/>
    </location>
</feature>
<feature type="cross-link" description="Glycyl lysine isopeptide (Lys-Gly) (interchain with G-Cter in SUMO2); alternate" evidence="1">
    <location>
        <position position="106"/>
    </location>
</feature>
<feature type="splice variant" id="VSP_022533" description="In isoform 3 and isoform 4." evidence="8">
    <location>
        <begin position="426"/>
        <end position="430"/>
    </location>
</feature>
<feature type="splice variant" id="VSP_022534" description="In isoform 5." evidence="7">
    <original>FQEESLVDDSLLQDDDEEEEDNESRSWRR</original>
    <variation>RENITA</variation>
    <location>
        <begin position="984"/>
        <end position="1012"/>
    </location>
</feature>
<feature type="splice variant" id="VSP_022535" description="In isoform 2 and isoform 3." evidence="7 8">
    <original>DDSLLQDDDEEEEDNESRSWRR</original>
    <variation>VGFFFFSLVFPSLFIVLL</variation>
    <location>
        <begin position="991"/>
        <end position="1012"/>
    </location>
</feature>
<feature type="sequence conflict" description="In Ref. 2; BAC33537." evidence="9" ref="2">
    <original>N</original>
    <variation>K</variation>
    <location>
        <position position="324"/>
    </location>
</feature>
<feature type="sequence conflict" description="In Ref. 2; BAC33537." evidence="9" ref="2">
    <original>S</original>
    <variation>Y</variation>
    <location>
        <position position="494"/>
    </location>
</feature>
<feature type="sequence conflict" description="In Ref. 2; BAE42792." evidence="9" ref="2">
    <original>N</original>
    <variation>S</variation>
    <location>
        <position position="550"/>
    </location>
</feature>
<feature type="sequence conflict" description="In Ref. 2; BAC33537." evidence="9" ref="2">
    <original>E</original>
    <variation>G</variation>
    <location>
        <position position="777"/>
    </location>
</feature>
<feature type="sequence conflict" description="In Ref. 2; BAC33537." evidence="9" ref="2">
    <original>T</original>
    <variation>S</variation>
    <location>
        <position position="786"/>
    </location>
</feature>
<evidence type="ECO:0000250" key="1">
    <source>
        <dbReference type="UniProtKB" id="Q5T8P6"/>
    </source>
</evidence>
<evidence type="ECO:0000255" key="2"/>
<evidence type="ECO:0000255" key="3">
    <source>
        <dbReference type="PROSITE-ProRule" id="PRU00176"/>
    </source>
</evidence>
<evidence type="ECO:0000255" key="4">
    <source>
        <dbReference type="PROSITE-ProRule" id="PRU00723"/>
    </source>
</evidence>
<evidence type="ECO:0000256" key="5">
    <source>
        <dbReference type="SAM" id="MobiDB-lite"/>
    </source>
</evidence>
<evidence type="ECO:0000269" key="6">
    <source>
    </source>
</evidence>
<evidence type="ECO:0000303" key="7">
    <source>
    </source>
</evidence>
<evidence type="ECO:0000303" key="8">
    <source>
    </source>
</evidence>
<evidence type="ECO:0000305" key="9"/>
<evidence type="ECO:0000312" key="10">
    <source>
        <dbReference type="MGI" id="MGI:1921463"/>
    </source>
</evidence>
<evidence type="ECO:0007744" key="11">
    <source>
    </source>
</evidence>
<evidence type="ECO:0007744" key="12">
    <source>
    </source>
</evidence>
<keyword id="KW-0007">Acetylation</keyword>
<keyword id="KW-0025">Alternative splicing</keyword>
<keyword id="KW-0175">Coiled coil</keyword>
<keyword id="KW-0903">Direct protein sequencing</keyword>
<keyword id="KW-1017">Isopeptide bond</keyword>
<keyword id="KW-0479">Metal-binding</keyword>
<keyword id="KW-0597">Phosphoprotein</keyword>
<keyword id="KW-1185">Reference proteome</keyword>
<keyword id="KW-0677">Repeat</keyword>
<keyword id="KW-0694">RNA-binding</keyword>
<keyword id="KW-0832">Ubl conjugation</keyword>
<keyword id="KW-0862">Zinc</keyword>
<keyword id="KW-0863">Zinc-finger</keyword>
<protein>
    <recommendedName>
        <fullName evidence="9">RNA-binding protein 26</fullName>
    </recommendedName>
    <alternativeName>
        <fullName>Protein expressed in male leptotene and zygotene spermatocytes 393</fullName>
        <shortName>MLZ-393</shortName>
    </alternativeName>
    <alternativeName>
        <fullName>RNA-binding motif protein 26</fullName>
    </alternativeName>
</protein>
<gene>
    <name evidence="10" type="primary">Rbm26</name>
</gene>
<comment type="function">
    <text evidence="1">May be involved in the turnover of nuclear polyadenylated (pA+) RNA.</text>
</comment>
<comment type="alternative products">
    <event type="alternative splicing"/>
    <isoform>
        <id>Q6NZN0-1</id>
        <name>1</name>
        <sequence type="displayed"/>
    </isoform>
    <isoform>
        <id>Q6NZN0-2</id>
        <name>2</name>
        <sequence type="described" ref="VSP_022535"/>
    </isoform>
    <isoform>
        <id>Q6NZN0-3</id>
        <name>3</name>
        <sequence type="described" ref="VSP_022533 VSP_022535"/>
    </isoform>
    <isoform>
        <id>Q6NZN0-4</id>
        <name>4</name>
        <sequence type="described" ref="VSP_022533"/>
    </isoform>
    <isoform>
        <id>Q6NZN0-5</id>
        <name>5</name>
        <sequence type="described" ref="VSP_022534"/>
    </isoform>
</comment>
<comment type="tissue specificity">
    <text evidence="6">Expressed in testis and ovary.</text>
</comment>
<comment type="developmental stage">
    <text evidence="6">Expressed in testis and ovary at 15.5 dpc.</text>
</comment>
<comment type="sequence caution" evidence="9">
    <conflict type="erroneous initiation">
        <sequence resource="EMBL-CDS" id="AAH29079"/>
    </conflict>
    <text>Truncated N-terminus.</text>
</comment>
<comment type="sequence caution" evidence="9">
    <conflict type="frameshift">
        <sequence resource="EMBL-CDS" id="BAC33537"/>
    </conflict>
</comment>
<comment type="sequence caution" evidence="9">
    <conflict type="frameshift">
        <sequence resource="EMBL-CDS" id="BAC34721"/>
    </conflict>
</comment>
<comment type="sequence caution" evidence="9">
    <conflict type="erroneous initiation">
        <sequence resource="EMBL-CDS" id="BAE23881"/>
    </conflict>
    <text>Extended N-terminus.</text>
</comment>
<comment type="sequence caution" evidence="9">
    <conflict type="erroneous initiation">
        <sequence resource="EMBL-CDS" id="BAE42792"/>
    </conflict>
    <text>Extended N-terminus.</text>
</comment>
<comment type="sequence caution" evidence="9">
    <conflict type="frameshift">
        <sequence resource="EMBL" id="BC066051"/>
    </conflict>
</comment>
<sequence>MVSKMIIENFEALKSWLSKTLEPICDADPSALAKYVLALVKKDKSEKELKALCIDQLDVFLQKETQIFVEKLFDAVNTKSYLPPPEQPSSGSLKVDFLQHQEKDIKKEELTKEEEREKKFSRRLNHSPPQSSSRYRDNRSRDERKKDDRSRKRDYDRNPPRRDSYRDRYNRRRGRSRSYSRSRSRSWSKERLRDRDRDRSRTRSRSRTRSRERDLVKPKYDLDRTDPLENNYTPVSSVSNISSGHYPVPTLSSTITVIAPTHHGNNTTESWSEFHEDQVDHNSYVRPPMPKKRCRDYDEKGFCMRGDMCPFDHGSDPVVVEDVNLPGMLPFPAQPPVVEGPPPPGLPPPPPILTPPPVNLRPPVPPPGPLPPSLPPVTGPPPPLPPLQPSGMDAPPNSATSSVPTVVTTGIHHQPPPAPPSLFTAVFVLPDTYDTDGYNPEAPSITNTSRPMYRHRVHAQRPNLIGLTSGDMDLPPREKPPNKSSMRIVVDSESRKRTIGSGEPGVSTKKTWFDKPNFNRTNSPGFQKKVQFGNENTKLELRKVPPELNNISKLNEHFSRFGTLVNLQVAYNGDPEGALIQFATYEEAKKAISSTEAVLNNRFIKVYWHREGTTQQLQTTSPKVIQPLVQQPILPVVKQSVKERLGPVPSATTEPAEAQSATSELPQNVTKLSVKDRLGFVSKPSVSATEKVLSTSTGLTKTVYNPAALKAAQKTLSVSTPAVDNNEAQKKKQEALKLQQDVRKRKQEILEKHIETQKMLISKLEKNKTMKSEDKAEIMKTLEILTKNITKLKDEVKSTSPGRCLPKSIKTKTQMQKELLDTELDLYKKMQAGEEVTELRRKYTELQLEAAKRGILSSGRGRGIHTRGRGTAHGRGRGRGRGRGVPGHAVVDHRPRALEISAFTESDREDLLPHFAQYGEIEDCQIDDASLHAIITFKTRAEAEAAAIHGARFKGQDLKLAWNKPIANMSAVDTEEAEPDEEEFQEESLVDDSLLQDDDEEEEDNESRSWRR</sequence>
<reference key="1">
    <citation type="journal article" date="2004" name="Genome Res.">
        <title>The status, quality, and expansion of the NIH full-length cDNA project: the Mammalian Gene Collection (MGC).</title>
        <authorList>
            <consortium name="The MGC Project Team"/>
        </authorList>
    </citation>
    <scope>NUCLEOTIDE SEQUENCE [LARGE SCALE MRNA] (ISOFORM 2)</scope>
    <scope>NUCLEOTIDE SEQUENCE [LARGE SCALE MRNA] OF 723-1012 (ISOFORM 1)</scope>
    <scope>NUCLEOTIDE SEQUENCE [LARGE SCALE MRNA] OF 780-1012 (ISOFORM 5)</scope>
    <source>
        <strain>C57BL/6J</strain>
        <strain>FVB/N</strain>
        <tissue>Brain</tissue>
        <tissue>Mammary tumor</tissue>
    </source>
</reference>
<reference key="2">
    <citation type="journal article" date="2005" name="Science">
        <title>The transcriptional landscape of the mammalian genome.</title>
        <authorList>
            <person name="Carninci P."/>
            <person name="Kasukawa T."/>
            <person name="Katayama S."/>
            <person name="Gough J."/>
            <person name="Frith M.C."/>
            <person name="Maeda N."/>
            <person name="Oyama R."/>
            <person name="Ravasi T."/>
            <person name="Lenhard B."/>
            <person name="Wells C."/>
            <person name="Kodzius R."/>
            <person name="Shimokawa K."/>
            <person name="Bajic V.B."/>
            <person name="Brenner S.E."/>
            <person name="Batalov S."/>
            <person name="Forrest A.R."/>
            <person name="Zavolan M."/>
            <person name="Davis M.J."/>
            <person name="Wilming L.G."/>
            <person name="Aidinis V."/>
            <person name="Allen J.E."/>
            <person name="Ambesi-Impiombato A."/>
            <person name="Apweiler R."/>
            <person name="Aturaliya R.N."/>
            <person name="Bailey T.L."/>
            <person name="Bansal M."/>
            <person name="Baxter L."/>
            <person name="Beisel K.W."/>
            <person name="Bersano T."/>
            <person name="Bono H."/>
            <person name="Chalk A.M."/>
            <person name="Chiu K.P."/>
            <person name="Choudhary V."/>
            <person name="Christoffels A."/>
            <person name="Clutterbuck D.R."/>
            <person name="Crowe M.L."/>
            <person name="Dalla E."/>
            <person name="Dalrymple B.P."/>
            <person name="de Bono B."/>
            <person name="Della Gatta G."/>
            <person name="di Bernardo D."/>
            <person name="Down T."/>
            <person name="Engstrom P."/>
            <person name="Fagiolini M."/>
            <person name="Faulkner G."/>
            <person name="Fletcher C.F."/>
            <person name="Fukushima T."/>
            <person name="Furuno M."/>
            <person name="Futaki S."/>
            <person name="Gariboldi M."/>
            <person name="Georgii-Hemming P."/>
            <person name="Gingeras T.R."/>
            <person name="Gojobori T."/>
            <person name="Green R.E."/>
            <person name="Gustincich S."/>
            <person name="Harbers M."/>
            <person name="Hayashi Y."/>
            <person name="Hensch T.K."/>
            <person name="Hirokawa N."/>
            <person name="Hill D."/>
            <person name="Huminiecki L."/>
            <person name="Iacono M."/>
            <person name="Ikeo K."/>
            <person name="Iwama A."/>
            <person name="Ishikawa T."/>
            <person name="Jakt M."/>
            <person name="Kanapin A."/>
            <person name="Katoh M."/>
            <person name="Kawasawa Y."/>
            <person name="Kelso J."/>
            <person name="Kitamura H."/>
            <person name="Kitano H."/>
            <person name="Kollias G."/>
            <person name="Krishnan S.P."/>
            <person name="Kruger A."/>
            <person name="Kummerfeld S.K."/>
            <person name="Kurochkin I.V."/>
            <person name="Lareau L.F."/>
            <person name="Lazarevic D."/>
            <person name="Lipovich L."/>
            <person name="Liu J."/>
            <person name="Liuni S."/>
            <person name="McWilliam S."/>
            <person name="Madan Babu M."/>
            <person name="Madera M."/>
            <person name="Marchionni L."/>
            <person name="Matsuda H."/>
            <person name="Matsuzawa S."/>
            <person name="Miki H."/>
            <person name="Mignone F."/>
            <person name="Miyake S."/>
            <person name="Morris K."/>
            <person name="Mottagui-Tabar S."/>
            <person name="Mulder N."/>
            <person name="Nakano N."/>
            <person name="Nakauchi H."/>
            <person name="Ng P."/>
            <person name="Nilsson R."/>
            <person name="Nishiguchi S."/>
            <person name="Nishikawa S."/>
            <person name="Nori F."/>
            <person name="Ohara O."/>
            <person name="Okazaki Y."/>
            <person name="Orlando V."/>
            <person name="Pang K.C."/>
            <person name="Pavan W.J."/>
            <person name="Pavesi G."/>
            <person name="Pesole G."/>
            <person name="Petrovsky N."/>
            <person name="Piazza S."/>
            <person name="Reed J."/>
            <person name="Reid J.F."/>
            <person name="Ring B.Z."/>
            <person name="Ringwald M."/>
            <person name="Rost B."/>
            <person name="Ruan Y."/>
            <person name="Salzberg S.L."/>
            <person name="Sandelin A."/>
            <person name="Schneider C."/>
            <person name="Schoenbach C."/>
            <person name="Sekiguchi K."/>
            <person name="Semple C.A."/>
            <person name="Seno S."/>
            <person name="Sessa L."/>
            <person name="Sheng Y."/>
            <person name="Shibata Y."/>
            <person name="Shimada H."/>
            <person name="Shimada K."/>
            <person name="Silva D."/>
            <person name="Sinclair B."/>
            <person name="Sperling S."/>
            <person name="Stupka E."/>
            <person name="Sugiura K."/>
            <person name="Sultana R."/>
            <person name="Takenaka Y."/>
            <person name="Taki K."/>
            <person name="Tammoja K."/>
            <person name="Tan S.L."/>
            <person name="Tang S."/>
            <person name="Taylor M.S."/>
            <person name="Tegner J."/>
            <person name="Teichmann S.A."/>
            <person name="Ueda H.R."/>
            <person name="van Nimwegen E."/>
            <person name="Verardo R."/>
            <person name="Wei C.L."/>
            <person name="Yagi K."/>
            <person name="Yamanishi H."/>
            <person name="Zabarovsky E."/>
            <person name="Zhu S."/>
            <person name="Zimmer A."/>
            <person name="Hide W."/>
            <person name="Bult C."/>
            <person name="Grimmond S.M."/>
            <person name="Teasdale R.D."/>
            <person name="Liu E.T."/>
            <person name="Brusic V."/>
            <person name="Quackenbush J."/>
            <person name="Wahlestedt C."/>
            <person name="Mattick J.S."/>
            <person name="Hume D.A."/>
            <person name="Kai C."/>
            <person name="Sasaki D."/>
            <person name="Tomaru Y."/>
            <person name="Fukuda S."/>
            <person name="Kanamori-Katayama M."/>
            <person name="Suzuki M."/>
            <person name="Aoki J."/>
            <person name="Arakawa T."/>
            <person name="Iida J."/>
            <person name="Imamura K."/>
            <person name="Itoh M."/>
            <person name="Kato T."/>
            <person name="Kawaji H."/>
            <person name="Kawagashira N."/>
            <person name="Kawashima T."/>
            <person name="Kojima M."/>
            <person name="Kondo S."/>
            <person name="Konno H."/>
            <person name="Nakano K."/>
            <person name="Ninomiya N."/>
            <person name="Nishio T."/>
            <person name="Okada M."/>
            <person name="Plessy C."/>
            <person name="Shibata K."/>
            <person name="Shiraki T."/>
            <person name="Suzuki S."/>
            <person name="Tagami M."/>
            <person name="Waki K."/>
            <person name="Watahiki A."/>
            <person name="Okamura-Oho Y."/>
            <person name="Suzuki H."/>
            <person name="Kawai J."/>
            <person name="Hayashizaki Y."/>
        </authorList>
    </citation>
    <scope>NUCLEOTIDE SEQUENCE [LARGE SCALE MRNA] OF 1-746 (ISOFORM 4)</scope>
    <scope>NUCLEOTIDE SEQUENCE [LARGE SCALE MRNA] OF 24-999 (ISOFORM 3)</scope>
    <source>
        <strain>C57BL/6J</strain>
        <strain>NOD</strain>
        <tissue>Cerebellum</tissue>
        <tissue>Spinal ganglion</tissue>
        <tissue>Spleen</tissue>
    </source>
</reference>
<reference key="3">
    <citation type="submission" date="2009-01" db="UniProtKB">
        <authorList>
            <person name="Lubec G."/>
            <person name="Sunyer B."/>
            <person name="Chen W.-Q."/>
        </authorList>
    </citation>
    <scope>PROTEIN SEQUENCE OF 692-701</scope>
    <scope>IDENTIFICATION BY MASS SPECTROMETRY</scope>
    <source>
        <strain>OF1</strain>
        <tissue>Hippocampus</tissue>
    </source>
</reference>
<reference key="4">
    <citation type="journal article" date="2010" name="Cell">
        <title>A tissue-specific atlas of mouse protein phosphorylation and expression.</title>
        <authorList>
            <person name="Huttlin E.L."/>
            <person name="Jedrychowski M.P."/>
            <person name="Elias J.E."/>
            <person name="Goswami T."/>
            <person name="Rad R."/>
            <person name="Beausoleil S.A."/>
            <person name="Villen J."/>
            <person name="Haas W."/>
            <person name="Sowa M.E."/>
            <person name="Gygi S.P."/>
        </authorList>
    </citation>
    <scope>PHOSPHORYLATION [LARGE SCALE ANALYSIS] AT SER-127 AND SER-621</scope>
    <scope>IDENTIFICATION BY MASS SPECTROMETRY [LARGE SCALE ANALYSIS]</scope>
    <source>
        <tissue>Brain</tissue>
        <tissue>Heart</tissue>
        <tissue>Kidney</tissue>
        <tissue>Liver</tissue>
        <tissue>Lung</tissue>
        <tissue>Pancreas</tissue>
        <tissue>Spleen</tissue>
        <tissue>Testis</tissue>
    </source>
</reference>
<reference key="5">
    <citation type="journal article" date="2010" name="J. Hum. Genet.">
        <title>Screening of genes involved in chromosome segregation during meiosis I: toward the identification of genes responsible for infertility in humans.</title>
        <authorList>
            <person name="Kogo H."/>
            <person name="Kowa-Sugiyama H."/>
            <person name="Yamada K."/>
            <person name="Bolor H."/>
            <person name="Tsutsumi M."/>
            <person name="Ohye T."/>
            <person name="Inagaki H."/>
            <person name="Taniguchi M."/>
            <person name="Toda T."/>
            <person name="Kurahashi H."/>
        </authorList>
    </citation>
    <scope>TISSUE SPECIFICITY</scope>
    <scope>DEVELOPMENTAL STAGE</scope>
</reference>
<reference key="6">
    <citation type="journal article" date="2013" name="Mol. Cell">
        <title>SIRT5-mediated lysine desuccinylation impacts diverse metabolic pathways.</title>
        <authorList>
            <person name="Park J."/>
            <person name="Chen Y."/>
            <person name="Tishkoff D.X."/>
            <person name="Peng C."/>
            <person name="Tan M."/>
            <person name="Dai L."/>
            <person name="Xie Z."/>
            <person name="Zhang Y."/>
            <person name="Zwaans B.M."/>
            <person name="Skinner M.E."/>
            <person name="Lombard D.B."/>
            <person name="Zhao Y."/>
        </authorList>
    </citation>
    <scope>ACETYLATION [LARGE SCALE ANALYSIS] AT LYS-515</scope>
    <scope>IDENTIFICATION BY MASS SPECTROMETRY [LARGE SCALE ANALYSIS]</scope>
    <source>
        <tissue>Embryonic fibroblast</tissue>
    </source>
</reference>
<name>RBM26_MOUSE</name>